<proteinExistence type="inferred from homology"/>
<protein>
    <recommendedName>
        <fullName evidence="1">Phosphoenolpyruvate transferase</fullName>
        <ecNumber evidence="1">2.7.8.28</ecNumber>
    </recommendedName>
    <alternativeName>
        <fullName evidence="1">EPPG:FO PEP transferase</fullName>
    </alternativeName>
</protein>
<evidence type="ECO:0000255" key="1">
    <source>
        <dbReference type="HAMAP-Rule" id="MF_01257"/>
    </source>
</evidence>
<accession>A0QKC7</accession>
<feature type="chain" id="PRO_1000067249" description="Phosphoenolpyruvate transferase">
    <location>
        <begin position="1"/>
        <end position="337"/>
    </location>
</feature>
<feature type="binding site" evidence="1">
    <location>
        <position position="69"/>
    </location>
    <ligand>
        <name>7,8-didemethyl-8-hydroxy-5-deazariboflavin</name>
        <dbReference type="ChEBI" id="CHEBI:59904"/>
    </ligand>
</feature>
<sequence>MKVTVLVGGVGGARFLLGVQQLFGLGQFRAQRHTHGRPDTAAGSHELTAIVNIGDDAWIHGLRVCPDLDTCMYTLGGGVDPERGWGHRDETWHAKEELARYGVQPDWFGLGDRDIGTHLVRTQMLNAGYPLTQITAALCDRWQPGARLLPVSDDRCETHVVITDPDDGSRRAIHFQEWWVRYRAQVPTHSFAFVGAEKAAATTETIAAIADADVILIAPSNPVVSVGAILAVPGVRGALRAAGAPIVGYSPIIGGKPLRGMADACLSVIGVESTAEAVGRHYGARRGTGILDCWLVSQDDHADIEGVAVRAVPLMMTDPAATAEMVSAGLQLAGVTP</sequence>
<dbReference type="EC" id="2.7.8.28" evidence="1"/>
<dbReference type="EMBL" id="CP000479">
    <property type="protein sequence ID" value="ABK69085.1"/>
    <property type="molecule type" value="Genomic_DNA"/>
</dbReference>
<dbReference type="SMR" id="A0QKC7"/>
<dbReference type="KEGG" id="mav:MAV_4224"/>
<dbReference type="HOGENOM" id="CLU_055795_0_0_11"/>
<dbReference type="UniPathway" id="UPA00071"/>
<dbReference type="Proteomes" id="UP000001574">
    <property type="component" value="Chromosome"/>
</dbReference>
<dbReference type="GO" id="GO:0043743">
    <property type="term" value="F:LPPG:FO 2-phospho-L-lactate transferase activity"/>
    <property type="evidence" value="ECO:0007669"/>
    <property type="project" value="UniProtKB-EC"/>
</dbReference>
<dbReference type="GO" id="GO:0000287">
    <property type="term" value="F:magnesium ion binding"/>
    <property type="evidence" value="ECO:0007669"/>
    <property type="project" value="InterPro"/>
</dbReference>
<dbReference type="GO" id="GO:0052645">
    <property type="term" value="P:F420-0 metabolic process"/>
    <property type="evidence" value="ECO:0007669"/>
    <property type="project" value="UniProtKB-UniRule"/>
</dbReference>
<dbReference type="CDD" id="cd07186">
    <property type="entry name" value="CofD_like"/>
    <property type="match status" value="1"/>
</dbReference>
<dbReference type="FunFam" id="1.10.8.240:FF:000001">
    <property type="entry name" value="2-phospho-L-lactate transferase"/>
    <property type="match status" value="1"/>
</dbReference>
<dbReference type="Gene3D" id="1.10.8.240">
    <property type="entry name" value="CofD-like domain"/>
    <property type="match status" value="1"/>
</dbReference>
<dbReference type="Gene3D" id="3.40.50.10680">
    <property type="entry name" value="CofD-like domains"/>
    <property type="match status" value="1"/>
</dbReference>
<dbReference type="HAMAP" id="MF_01257">
    <property type="entry name" value="CofD"/>
    <property type="match status" value="1"/>
</dbReference>
<dbReference type="InterPro" id="IPR002882">
    <property type="entry name" value="CofD"/>
</dbReference>
<dbReference type="InterPro" id="IPR038136">
    <property type="entry name" value="CofD-like_dom_sf"/>
</dbReference>
<dbReference type="InterPro" id="IPR010115">
    <property type="entry name" value="FbiA/CofD"/>
</dbReference>
<dbReference type="NCBIfam" id="TIGR01819">
    <property type="entry name" value="F420_cofD"/>
    <property type="match status" value="1"/>
</dbReference>
<dbReference type="PANTHER" id="PTHR43007">
    <property type="entry name" value="2-PHOSPHO-L-LACTATE TRANSFERASE"/>
    <property type="match status" value="1"/>
</dbReference>
<dbReference type="PANTHER" id="PTHR43007:SF1">
    <property type="entry name" value="2-PHOSPHO-L-LACTATE TRANSFERASE"/>
    <property type="match status" value="1"/>
</dbReference>
<dbReference type="Pfam" id="PF01933">
    <property type="entry name" value="CofD"/>
    <property type="match status" value="1"/>
</dbReference>
<dbReference type="SUPFAM" id="SSF142338">
    <property type="entry name" value="CofD-like"/>
    <property type="match status" value="1"/>
</dbReference>
<comment type="function">
    <text evidence="1">Catalyzes the transfer of the phosphoenolpyruvate moiety from enoylpyruvoyl-2-diphospho-5'-guanosine (EPPG) to 7,8-didemethyl-8-hydroxy-5-deazariboflavin (FO) with the formation of dehydro coenzyme F420-0 and GMP.</text>
</comment>
<comment type="catalytic activity">
    <reaction evidence="1">
        <text>enolpyruvoyl-2-diphospho-5'-guanosine + 7,8-didemethyl-8-hydroxy-5-deazariboflavin = dehydro coenzyme F420-0 + GMP + H(+)</text>
        <dbReference type="Rhea" id="RHEA:27510"/>
        <dbReference type="ChEBI" id="CHEBI:15378"/>
        <dbReference type="ChEBI" id="CHEBI:58115"/>
        <dbReference type="ChEBI" id="CHEBI:59904"/>
        <dbReference type="ChEBI" id="CHEBI:143701"/>
        <dbReference type="ChEBI" id="CHEBI:143705"/>
        <dbReference type="EC" id="2.7.8.28"/>
    </reaction>
</comment>
<comment type="cofactor">
    <cofactor evidence="1">
        <name>Mg(2+)</name>
        <dbReference type="ChEBI" id="CHEBI:18420"/>
    </cofactor>
</comment>
<comment type="pathway">
    <text evidence="1">Cofactor biosynthesis; coenzyme F420 biosynthesis.</text>
</comment>
<comment type="subunit">
    <text evidence="1">Homodimer.</text>
</comment>
<comment type="similarity">
    <text evidence="1">Belongs to the CofD family.</text>
</comment>
<reference key="1">
    <citation type="submission" date="2006-10" db="EMBL/GenBank/DDBJ databases">
        <authorList>
            <person name="Fleischmann R.D."/>
            <person name="Dodson R.J."/>
            <person name="Haft D.H."/>
            <person name="Merkel J.S."/>
            <person name="Nelson W.C."/>
            <person name="Fraser C.M."/>
        </authorList>
    </citation>
    <scope>NUCLEOTIDE SEQUENCE [LARGE SCALE GENOMIC DNA]</scope>
    <source>
        <strain>104</strain>
    </source>
</reference>
<name>FBIA_MYCA1</name>
<organism>
    <name type="scientific">Mycobacterium avium (strain 104)</name>
    <dbReference type="NCBI Taxonomy" id="243243"/>
    <lineage>
        <taxon>Bacteria</taxon>
        <taxon>Bacillati</taxon>
        <taxon>Actinomycetota</taxon>
        <taxon>Actinomycetes</taxon>
        <taxon>Mycobacteriales</taxon>
        <taxon>Mycobacteriaceae</taxon>
        <taxon>Mycobacterium</taxon>
        <taxon>Mycobacterium avium complex (MAC)</taxon>
    </lineage>
</organism>
<gene>
    <name evidence="1" type="primary">fbiA</name>
    <name type="ordered locus">MAV_4224</name>
</gene>
<keyword id="KW-0460">Magnesium</keyword>
<keyword id="KW-0808">Transferase</keyword>